<gene>
    <name type="primary">AQP4</name>
</gene>
<proteinExistence type="evidence at transcript level"/>
<keyword id="KW-0025">Alternative splicing</keyword>
<keyword id="KW-1003">Cell membrane</keyword>
<keyword id="KW-0966">Cell projection</keyword>
<keyword id="KW-0967">Endosome</keyword>
<keyword id="KW-0325">Glycoprotein</keyword>
<keyword id="KW-0449">Lipoprotein</keyword>
<keyword id="KW-0472">Membrane</keyword>
<keyword id="KW-0564">Palmitate</keyword>
<keyword id="KW-0597">Phosphoprotein</keyword>
<keyword id="KW-0677">Repeat</keyword>
<keyword id="KW-0812">Transmembrane</keyword>
<keyword id="KW-1133">Transmembrane helix</keyword>
<keyword id="KW-0813">Transport</keyword>
<comment type="function">
    <text evidence="4">Forms a water-specific channel. Plays an important role in brain water homeostasis and in glymphatic solute transport. Required for a normal rate of water exchange across the blood brain interface. Required for normal levels of cerebrospinal fluid influx into the brain cortex and parenchyma along paravascular spaces that surround penetrating arteries, and for normal drainage of interstitial fluid along paravenous drainage pathways. Thereby, it is required for normal clearance of solutes from the brain interstitial fluid, including soluble beta-amyloid peptides derived from APP. Plays a redundant role in urinary water homeostasis and urinary concentrating ability.</text>
</comment>
<comment type="catalytic activity">
    <reaction evidence="3">
        <text>H2O(in) = H2O(out)</text>
        <dbReference type="Rhea" id="RHEA:29667"/>
        <dbReference type="ChEBI" id="CHEBI:15377"/>
    </reaction>
</comment>
<comment type="subunit">
    <text evidence="2 3">Homotetramer. The tetramers can form oligomeric arrays in membranes. The size of the oligomers differs between tissues and is smaller in skeletal muscle than in brain. Interaction between AQP4 oligomeric arrays in close-by cells can contribute to cell-cell adhesion (By similarity). Part of a complex containing MLC1, TRPV4, HEPACAM and ATP1B1 (By similarity).</text>
</comment>
<comment type="subcellular location">
    <subcellularLocation>
        <location evidence="4">Cell membrane</location>
        <topology evidence="3">Multi-pass membrane protein</topology>
    </subcellularLocation>
    <subcellularLocation>
        <location evidence="4">Basolateral cell membrane</location>
        <topology evidence="3">Multi-pass membrane protein</topology>
    </subcellularLocation>
    <subcellularLocation>
        <location evidence="2">Endosome membrane</location>
    </subcellularLocation>
    <subcellularLocation>
        <location evidence="4">Cell membrane</location>
        <location evidence="4">Sarcolemma</location>
        <topology evidence="3">Multi-pass membrane protein</topology>
    </subcellularLocation>
    <subcellularLocation>
        <location evidence="4">Cell projection</location>
    </subcellularLocation>
    <text evidence="2 4">Activation of the vasopressin receptor AVPR1A triggers AQP4 phosphorylation at Ser-180 and promotes its internalization from the cell membrane (By similarity). Detected on brain astrocyte processes and astrocyte endfeet close to capillaries (By similarity).</text>
</comment>
<comment type="alternative products">
    <event type="alternative splicing"/>
    <isoform>
        <id>Q923J4-1</id>
        <name>2</name>
        <sequence type="displayed"/>
    </isoform>
    <isoform>
        <id>Q923J4-2</id>
        <name>1</name>
        <sequence type="described" ref="VSP_010210"/>
    </isoform>
</comment>
<comment type="tissue specificity">
    <text evidence="7">Not expressed in kidney, Detectable in gastric parietal and brain astroglial cells. The absence of AQP4 in kidney may be critical for the extreme urinary concentration that occurs in this species (up to 5,000 mosmol/kg H(2)O).</text>
</comment>
<comment type="domain">
    <text evidence="3">Aquaporins contain two tandem repeats each containing three membrane-spanning domains and a pore-forming loop with the signature motif Asn-Pro-Ala (NPA).</text>
</comment>
<comment type="PTM">
    <text evidence="1">Phosphorylation by PKC at Ser-180 reduces conductance by 50%. Phosphorylation by PKG at Ser-111 in response to glutamate increases conductance by 40% (By similarity).</text>
</comment>
<comment type="PTM">
    <text evidence="2">Isoform 2: Palmitoylated on its N-terminal region. Isoform 1: Not palmitoylated.</text>
</comment>
<comment type="similarity">
    <text evidence="8">Belongs to the MIP/aquaporin (TC 1.A.8) family.</text>
</comment>
<dbReference type="EMBL" id="AY032857">
    <property type="protein sequence ID" value="AAK66823.1"/>
    <property type="molecule type" value="mRNA"/>
</dbReference>
<dbReference type="EMBL" id="AY032858">
    <property type="protein sequence ID" value="AAK66824.1"/>
    <property type="molecule type" value="mRNA"/>
</dbReference>
<dbReference type="SMR" id="Q923J4"/>
<dbReference type="GlyCosmos" id="Q923J4">
    <property type="glycosylation" value="2 sites, No reported glycans"/>
</dbReference>
<dbReference type="GO" id="GO:0097450">
    <property type="term" value="C:astrocyte end-foot"/>
    <property type="evidence" value="ECO:0000250"/>
    <property type="project" value="UniProtKB"/>
</dbReference>
<dbReference type="GO" id="GO:0016323">
    <property type="term" value="C:basolateral plasma membrane"/>
    <property type="evidence" value="ECO:0000250"/>
    <property type="project" value="UniProtKB"/>
</dbReference>
<dbReference type="GO" id="GO:0010008">
    <property type="term" value="C:endosome membrane"/>
    <property type="evidence" value="ECO:0007669"/>
    <property type="project" value="UniProtKB-SubCell"/>
</dbReference>
<dbReference type="GO" id="GO:0005576">
    <property type="term" value="C:extracellular region"/>
    <property type="evidence" value="ECO:0007669"/>
    <property type="project" value="GOC"/>
</dbReference>
<dbReference type="GO" id="GO:0005886">
    <property type="term" value="C:plasma membrane"/>
    <property type="evidence" value="ECO:0000250"/>
    <property type="project" value="UniProtKB"/>
</dbReference>
<dbReference type="GO" id="GO:0042383">
    <property type="term" value="C:sarcolemma"/>
    <property type="evidence" value="ECO:0000250"/>
    <property type="project" value="UniProtKB"/>
</dbReference>
<dbReference type="GO" id="GO:0015250">
    <property type="term" value="F:water channel activity"/>
    <property type="evidence" value="ECO:0000250"/>
    <property type="project" value="UniProtKB"/>
</dbReference>
<dbReference type="GO" id="GO:0090660">
    <property type="term" value="P:cerebrospinal fluid circulation"/>
    <property type="evidence" value="ECO:0000250"/>
    <property type="project" value="UniProtKB"/>
</dbReference>
<dbReference type="GO" id="GO:0009992">
    <property type="term" value="P:intracellular water homeostasis"/>
    <property type="evidence" value="ECO:0000250"/>
    <property type="project" value="UniProtKB"/>
</dbReference>
<dbReference type="GO" id="GO:0050891">
    <property type="term" value="P:multicellular organismal-level water homeostasis"/>
    <property type="evidence" value="ECO:0000250"/>
    <property type="project" value="UniProtKB"/>
</dbReference>
<dbReference type="GO" id="GO:0051289">
    <property type="term" value="P:protein homotetramerization"/>
    <property type="evidence" value="ECO:0000250"/>
    <property type="project" value="UniProtKB"/>
</dbReference>
<dbReference type="GO" id="GO:0006833">
    <property type="term" value="P:water transport"/>
    <property type="evidence" value="ECO:0000250"/>
    <property type="project" value="UniProtKB"/>
</dbReference>
<dbReference type="CDD" id="cd00333">
    <property type="entry name" value="MIP"/>
    <property type="match status" value="1"/>
</dbReference>
<dbReference type="FunFam" id="1.20.1080.10:FF:000009">
    <property type="entry name" value="aquaporin-4 isoform X1"/>
    <property type="match status" value="1"/>
</dbReference>
<dbReference type="Gene3D" id="1.20.1080.10">
    <property type="entry name" value="Glycerol uptake facilitator protein"/>
    <property type="match status" value="1"/>
</dbReference>
<dbReference type="InterPro" id="IPR023271">
    <property type="entry name" value="Aquaporin-like"/>
</dbReference>
<dbReference type="InterPro" id="IPR034294">
    <property type="entry name" value="Aquaporin_transptr"/>
</dbReference>
<dbReference type="InterPro" id="IPR000425">
    <property type="entry name" value="MIP"/>
</dbReference>
<dbReference type="InterPro" id="IPR022357">
    <property type="entry name" value="MIP_CS"/>
</dbReference>
<dbReference type="NCBIfam" id="TIGR00861">
    <property type="entry name" value="MIP"/>
    <property type="match status" value="1"/>
</dbReference>
<dbReference type="PANTHER" id="PTHR19139">
    <property type="entry name" value="AQUAPORIN TRANSPORTER"/>
    <property type="match status" value="1"/>
</dbReference>
<dbReference type="PANTHER" id="PTHR19139:SF34">
    <property type="entry name" value="AQUAPORIN-4"/>
    <property type="match status" value="1"/>
</dbReference>
<dbReference type="Pfam" id="PF00230">
    <property type="entry name" value="MIP"/>
    <property type="match status" value="1"/>
</dbReference>
<dbReference type="PRINTS" id="PR02016">
    <property type="entry name" value="AQUAPORIN4"/>
</dbReference>
<dbReference type="PRINTS" id="PR00783">
    <property type="entry name" value="MINTRINSICP"/>
</dbReference>
<dbReference type="SUPFAM" id="SSF81338">
    <property type="entry name" value="Aquaporin-like"/>
    <property type="match status" value="1"/>
</dbReference>
<dbReference type="PROSITE" id="PS00221">
    <property type="entry name" value="MIP"/>
    <property type="match status" value="1"/>
</dbReference>
<accession>Q923J4</accession>
<accession>Q923J5</accession>
<protein>
    <recommendedName>
        <fullName>Aquaporin-4</fullName>
        <shortName>AQP-4</shortName>
    </recommendedName>
</protein>
<name>AQP4_DIPME</name>
<feature type="chain" id="PRO_0000063947" description="Aquaporin-4">
    <location>
        <begin position="1"/>
        <end position="324"/>
    </location>
</feature>
<feature type="topological domain" description="Cytoplasmic" evidence="8">
    <location>
        <begin position="1"/>
        <end position="36"/>
    </location>
</feature>
<feature type="transmembrane region" description="Helical" evidence="3">
    <location>
        <begin position="37"/>
        <end position="57"/>
    </location>
</feature>
<feature type="topological domain" description="Extracellular" evidence="8">
    <location>
        <begin position="58"/>
        <end position="69"/>
    </location>
</feature>
<feature type="transmembrane region" description="Helical" evidence="3">
    <location>
        <begin position="70"/>
        <end position="89"/>
    </location>
</feature>
<feature type="topological domain" description="Cytoplasmic" evidence="8">
    <location>
        <begin position="90"/>
        <end position="93"/>
    </location>
</feature>
<feature type="intramembrane region" description="Discontinuously helical" evidence="3">
    <location>
        <begin position="94"/>
        <end position="101"/>
    </location>
</feature>
<feature type="topological domain" description="Cytoplasmic" evidence="8">
    <location>
        <begin position="102"/>
        <end position="115"/>
    </location>
</feature>
<feature type="transmembrane region" description="Helical" evidence="3">
    <location>
        <begin position="116"/>
        <end position="136"/>
    </location>
</feature>
<feature type="topological domain" description="Extracellular" evidence="8">
    <location>
        <begin position="137"/>
        <end position="155"/>
    </location>
</feature>
<feature type="transmembrane region" description="Helical" evidence="3">
    <location>
        <begin position="156"/>
        <end position="176"/>
    </location>
</feature>
<feature type="topological domain" description="Cytoplasmic" evidence="8">
    <location>
        <begin position="177"/>
        <end position="184"/>
    </location>
</feature>
<feature type="transmembrane region" description="Helical" evidence="3">
    <location>
        <begin position="185"/>
        <end position="205"/>
    </location>
</feature>
<feature type="topological domain" description="Extracellular" evidence="8">
    <location>
        <begin position="206"/>
        <end position="208"/>
    </location>
</feature>
<feature type="intramembrane region" description="Discontinuously helical" evidence="3">
    <location>
        <begin position="209"/>
        <end position="222"/>
    </location>
</feature>
<feature type="topological domain" description="Extracellular" evidence="8">
    <location>
        <begin position="223"/>
        <end position="231"/>
    </location>
</feature>
<feature type="transmembrane region" description="Helical" evidence="3">
    <location>
        <begin position="232"/>
        <end position="252"/>
    </location>
</feature>
<feature type="topological domain" description="Cytoplasmic" evidence="8">
    <location>
        <begin position="253"/>
        <end position="324"/>
    </location>
</feature>
<feature type="region of interest" description="Disordered" evidence="6">
    <location>
        <begin position="305"/>
        <end position="324"/>
    </location>
</feature>
<feature type="short sequence motif" description="NPA 1" evidence="3">
    <location>
        <begin position="97"/>
        <end position="99"/>
    </location>
</feature>
<feature type="short sequence motif" description="NPA 2" evidence="3">
    <location>
        <begin position="213"/>
        <end position="215"/>
    </location>
</feature>
<feature type="compositionally biased region" description="Basic and acidic residues" evidence="6">
    <location>
        <begin position="305"/>
        <end position="316"/>
    </location>
</feature>
<feature type="modified residue" description="Phosphoserine; by PKG" evidence="4">
    <location>
        <position position="111"/>
    </location>
</feature>
<feature type="modified residue" description="Phosphoserine; by PKC" evidence="2">
    <location>
        <position position="180"/>
    </location>
</feature>
<feature type="modified residue" description="Phosphoserine" evidence="2">
    <location>
        <position position="276"/>
    </location>
</feature>
<feature type="modified residue" description="Phosphoserine" evidence="4">
    <location>
        <position position="285"/>
    </location>
</feature>
<feature type="modified residue" description="Phosphothreonine" evidence="4">
    <location>
        <position position="289"/>
    </location>
</feature>
<feature type="lipid moiety-binding region" description="S-palmitoyl cysteine" evidence="2">
    <location>
        <position position="13"/>
    </location>
</feature>
<feature type="lipid moiety-binding region" description="S-palmitoyl cysteine" evidence="2">
    <location>
        <position position="17"/>
    </location>
</feature>
<feature type="glycosylation site" description="N-linked (GlcNAc...) asparagine" evidence="5">
    <location>
        <position position="153"/>
    </location>
</feature>
<feature type="glycosylation site" description="N-linked (GlcNAc...) asparagine" evidence="5">
    <location>
        <position position="206"/>
    </location>
</feature>
<feature type="splice variant" id="VSP_010210" description="In isoform 1." evidence="8">
    <location>
        <begin position="1"/>
        <end position="22"/>
    </location>
</feature>
<sequence length="324" mass="34940">MSDRPAARPWGKCGSLCRREEIMVAFKGVWTQAFWKAVTAEFLAMLIFVLLSLGSTINWGGKENPLPVDMVLISLCFGLSIATMVQCFGHISGGHINPAVTVAMVCTRKISIAKSVFYIAAQCLGAIIGAGILYLVTPPSVVGGLGVTTVHGNLTAGHGLLVELIITFQLVFTIFASCDSKRTDVTGSIALAIGFSVAIGHLFAINYTGASMNPARSFGPAVIMGNWENHWIYWVGPIIGAVLAGGLYEYVFCPDVELKRRFKEAFSKAAQQTKGSYMEVEDNRSQVETEDLILKPGLVHVIDIDRGDEKKGKDPSGEIAQTQH</sequence>
<organism>
    <name type="scientific">Dipodomys merriami</name>
    <name type="common">Merriam's kangaroo rat</name>
    <dbReference type="NCBI Taxonomy" id="94247"/>
    <lineage>
        <taxon>Eukaryota</taxon>
        <taxon>Metazoa</taxon>
        <taxon>Chordata</taxon>
        <taxon>Craniata</taxon>
        <taxon>Vertebrata</taxon>
        <taxon>Euteleostomi</taxon>
        <taxon>Mammalia</taxon>
        <taxon>Eutheria</taxon>
        <taxon>Euarchontoglires</taxon>
        <taxon>Glires</taxon>
        <taxon>Rodentia</taxon>
        <taxon>Castorimorpha</taxon>
        <taxon>Heteromyidae</taxon>
        <taxon>Dipodomyinae</taxon>
        <taxon>Dipodomys</taxon>
    </lineage>
</organism>
<reference key="1">
    <citation type="submission" date="2001-04" db="EMBL/GenBank/DDBJ databases">
        <title>Molecular cloning and characterization of Merriam's kangaroo rat aquaporin 4.</title>
        <authorList>
            <person name="Fang P.K."/>
            <person name="Huang Y."/>
            <person name="Walsberg G.E."/>
            <person name="Brown D."/>
            <person name="van Hoek A.N."/>
        </authorList>
    </citation>
    <scope>NUCLEOTIDE SEQUENCE [MRNA]</scope>
</reference>
<reference key="2">
    <citation type="journal article" date="2001" name="Am. J. Physiol.">
        <title>Absence of aquaporin-4 water channels from kidneys of the desert rodent Dipodomys merriami merriami.</title>
        <authorList>
            <person name="Huang Y."/>
            <person name="Tracy R."/>
            <person name="Walsberg G.E."/>
            <person name="Makkinje A."/>
            <person name="Fang P."/>
            <person name="Brown D."/>
            <person name="Van Hoek A.N."/>
        </authorList>
    </citation>
    <scope>TISSUE SPECIFICITY</scope>
</reference>
<evidence type="ECO:0000250" key="1"/>
<evidence type="ECO:0000250" key="2">
    <source>
        <dbReference type="UniProtKB" id="P47863"/>
    </source>
</evidence>
<evidence type="ECO:0000250" key="3">
    <source>
        <dbReference type="UniProtKB" id="P55087"/>
    </source>
</evidence>
<evidence type="ECO:0000250" key="4">
    <source>
        <dbReference type="UniProtKB" id="P55088"/>
    </source>
</evidence>
<evidence type="ECO:0000255" key="5"/>
<evidence type="ECO:0000256" key="6">
    <source>
        <dbReference type="SAM" id="MobiDB-lite"/>
    </source>
</evidence>
<evidence type="ECO:0000269" key="7">
    <source>
    </source>
</evidence>
<evidence type="ECO:0000305" key="8"/>